<proteinExistence type="inferred from homology"/>
<sequence length="232" mass="26371">MSVISMKQLLEAGVHFGHQTRRWNPKMGEYIFTERNGIYIIDLQKTVKKVEEAYSVMKDIATEGGTILFVGTKKQAQEAVEEEAKRSGMYFVNQRWLGGMLTNFKTIKKRIERLRELEKMEEDGTFEVLPKKEVIKLRHEQEKLEKFLGGIKDMTEMPDALFVVDPRKERIAIQEAHTLGIPVISIVDTNCDPDEVDYVIPGNDDAIRAVKLIASTMANAIIEGKQGVQTEA</sequence>
<reference key="1">
    <citation type="submission" date="2007-10" db="EMBL/GenBank/DDBJ databases">
        <title>Complete genome of Alkaliphilus oremlandii OhILAs.</title>
        <authorList>
            <person name="Copeland A."/>
            <person name="Lucas S."/>
            <person name="Lapidus A."/>
            <person name="Barry K."/>
            <person name="Detter J.C."/>
            <person name="Glavina del Rio T."/>
            <person name="Hammon N."/>
            <person name="Israni S."/>
            <person name="Dalin E."/>
            <person name="Tice H."/>
            <person name="Pitluck S."/>
            <person name="Chain P."/>
            <person name="Malfatti S."/>
            <person name="Shin M."/>
            <person name="Vergez L."/>
            <person name="Schmutz J."/>
            <person name="Larimer F."/>
            <person name="Land M."/>
            <person name="Hauser L."/>
            <person name="Kyrpides N."/>
            <person name="Mikhailova N."/>
            <person name="Stolz J.F."/>
            <person name="Dawson A."/>
            <person name="Fisher E."/>
            <person name="Crable B."/>
            <person name="Perera E."/>
            <person name="Lisak J."/>
            <person name="Ranganathan M."/>
            <person name="Basu P."/>
            <person name="Richardson P."/>
        </authorList>
    </citation>
    <scope>NUCLEOTIDE SEQUENCE [LARGE SCALE GENOMIC DNA]</scope>
    <source>
        <strain>OhILAs</strain>
    </source>
</reference>
<gene>
    <name evidence="1" type="primary">rpsB</name>
    <name type="ordered locus">Clos_1513</name>
</gene>
<feature type="chain" id="PRO_1000059257" description="Small ribosomal subunit protein uS2">
    <location>
        <begin position="1"/>
        <end position="232"/>
    </location>
</feature>
<dbReference type="EMBL" id="CP000853">
    <property type="protein sequence ID" value="ABW19056.1"/>
    <property type="molecule type" value="Genomic_DNA"/>
</dbReference>
<dbReference type="RefSeq" id="WP_012159368.1">
    <property type="nucleotide sequence ID" value="NC_009922.1"/>
</dbReference>
<dbReference type="SMR" id="A8MHG9"/>
<dbReference type="STRING" id="350688.Clos_1513"/>
<dbReference type="KEGG" id="aoe:Clos_1513"/>
<dbReference type="eggNOG" id="COG0052">
    <property type="taxonomic scope" value="Bacteria"/>
</dbReference>
<dbReference type="HOGENOM" id="CLU_040318_1_2_9"/>
<dbReference type="OrthoDB" id="9808036at2"/>
<dbReference type="Proteomes" id="UP000000269">
    <property type="component" value="Chromosome"/>
</dbReference>
<dbReference type="GO" id="GO:0022627">
    <property type="term" value="C:cytosolic small ribosomal subunit"/>
    <property type="evidence" value="ECO:0007669"/>
    <property type="project" value="TreeGrafter"/>
</dbReference>
<dbReference type="GO" id="GO:0003735">
    <property type="term" value="F:structural constituent of ribosome"/>
    <property type="evidence" value="ECO:0007669"/>
    <property type="project" value="InterPro"/>
</dbReference>
<dbReference type="GO" id="GO:0006412">
    <property type="term" value="P:translation"/>
    <property type="evidence" value="ECO:0007669"/>
    <property type="project" value="UniProtKB-UniRule"/>
</dbReference>
<dbReference type="CDD" id="cd01425">
    <property type="entry name" value="RPS2"/>
    <property type="match status" value="1"/>
</dbReference>
<dbReference type="FunFam" id="1.10.287.610:FF:000001">
    <property type="entry name" value="30S ribosomal protein S2"/>
    <property type="match status" value="1"/>
</dbReference>
<dbReference type="Gene3D" id="3.40.50.10490">
    <property type="entry name" value="Glucose-6-phosphate isomerase like protein, domain 1"/>
    <property type="match status" value="1"/>
</dbReference>
<dbReference type="Gene3D" id="1.10.287.610">
    <property type="entry name" value="Helix hairpin bin"/>
    <property type="match status" value="1"/>
</dbReference>
<dbReference type="HAMAP" id="MF_00291_B">
    <property type="entry name" value="Ribosomal_uS2_B"/>
    <property type="match status" value="1"/>
</dbReference>
<dbReference type="InterPro" id="IPR001865">
    <property type="entry name" value="Ribosomal_uS2"/>
</dbReference>
<dbReference type="InterPro" id="IPR005706">
    <property type="entry name" value="Ribosomal_uS2_bac/mit/plastid"/>
</dbReference>
<dbReference type="InterPro" id="IPR018130">
    <property type="entry name" value="Ribosomal_uS2_CS"/>
</dbReference>
<dbReference type="InterPro" id="IPR023591">
    <property type="entry name" value="Ribosomal_uS2_flav_dom_sf"/>
</dbReference>
<dbReference type="NCBIfam" id="TIGR01011">
    <property type="entry name" value="rpsB_bact"/>
    <property type="match status" value="1"/>
</dbReference>
<dbReference type="PANTHER" id="PTHR12534">
    <property type="entry name" value="30S RIBOSOMAL PROTEIN S2 PROKARYOTIC AND ORGANELLAR"/>
    <property type="match status" value="1"/>
</dbReference>
<dbReference type="PANTHER" id="PTHR12534:SF0">
    <property type="entry name" value="SMALL RIBOSOMAL SUBUNIT PROTEIN US2M"/>
    <property type="match status" value="1"/>
</dbReference>
<dbReference type="Pfam" id="PF00318">
    <property type="entry name" value="Ribosomal_S2"/>
    <property type="match status" value="1"/>
</dbReference>
<dbReference type="PRINTS" id="PR00395">
    <property type="entry name" value="RIBOSOMALS2"/>
</dbReference>
<dbReference type="SUPFAM" id="SSF52313">
    <property type="entry name" value="Ribosomal protein S2"/>
    <property type="match status" value="1"/>
</dbReference>
<dbReference type="PROSITE" id="PS00962">
    <property type="entry name" value="RIBOSOMAL_S2_1"/>
    <property type="match status" value="1"/>
</dbReference>
<dbReference type="PROSITE" id="PS00963">
    <property type="entry name" value="RIBOSOMAL_S2_2"/>
    <property type="match status" value="1"/>
</dbReference>
<protein>
    <recommendedName>
        <fullName evidence="1">Small ribosomal subunit protein uS2</fullName>
    </recommendedName>
    <alternativeName>
        <fullName evidence="2">30S ribosomal protein S2</fullName>
    </alternativeName>
</protein>
<organism>
    <name type="scientific">Alkaliphilus oremlandii (strain OhILAs)</name>
    <name type="common">Clostridium oremlandii (strain OhILAs)</name>
    <dbReference type="NCBI Taxonomy" id="350688"/>
    <lineage>
        <taxon>Bacteria</taxon>
        <taxon>Bacillati</taxon>
        <taxon>Bacillota</taxon>
        <taxon>Clostridia</taxon>
        <taxon>Peptostreptococcales</taxon>
        <taxon>Natronincolaceae</taxon>
        <taxon>Alkaliphilus</taxon>
    </lineage>
</organism>
<accession>A8MHG9</accession>
<evidence type="ECO:0000255" key="1">
    <source>
        <dbReference type="HAMAP-Rule" id="MF_00291"/>
    </source>
</evidence>
<evidence type="ECO:0000305" key="2"/>
<name>RS2_ALKOO</name>
<keyword id="KW-1185">Reference proteome</keyword>
<keyword id="KW-0687">Ribonucleoprotein</keyword>
<keyword id="KW-0689">Ribosomal protein</keyword>
<comment type="similarity">
    <text evidence="1">Belongs to the universal ribosomal protein uS2 family.</text>
</comment>